<feature type="chain" id="PRO_0000291966" description="Zinc finger protein 57">
    <location>
        <begin position="1"/>
        <end position="406"/>
    </location>
</feature>
<feature type="domain" description="KRAB" evidence="4">
    <location>
        <begin position="17"/>
        <end position="88"/>
    </location>
</feature>
<feature type="zinc finger region" description="C2H2-type 1; degenerate" evidence="3">
    <location>
        <begin position="90"/>
        <end position="113"/>
    </location>
</feature>
<feature type="zinc finger region" description="C2H2-type 2" evidence="3">
    <location>
        <begin position="140"/>
        <end position="162"/>
    </location>
</feature>
<feature type="zinc finger region" description="C2H2-type 3" evidence="3">
    <location>
        <begin position="168"/>
        <end position="190"/>
    </location>
</feature>
<feature type="zinc finger region" description="C2H2-type 4" evidence="3">
    <location>
        <begin position="270"/>
        <end position="292"/>
    </location>
</feature>
<feature type="zinc finger region" description="C2H2-type 5; degenerate" evidence="3">
    <location>
        <begin position="318"/>
        <end position="337"/>
    </location>
</feature>
<feature type="region of interest" description="Disordered" evidence="5">
    <location>
        <begin position="57"/>
        <end position="77"/>
    </location>
</feature>
<feature type="region of interest" description="Disordered" evidence="5">
    <location>
        <begin position="194"/>
        <end position="226"/>
    </location>
</feature>
<feature type="region of interest" description="Disordered" evidence="5">
    <location>
        <begin position="372"/>
        <end position="406"/>
    </location>
</feature>
<feature type="compositionally biased region" description="Acidic residues" evidence="5">
    <location>
        <begin position="395"/>
        <end position="406"/>
    </location>
</feature>
<feature type="site" description="Crucial for 5-methylcytosine recognition" evidence="1">
    <location>
        <position position="178"/>
    </location>
</feature>
<feature type="sequence conflict" description="In Ref. 1; CAE84067." evidence="7" ref="1">
    <location>
        <begin position="8"/>
        <end position="9"/>
    </location>
</feature>
<feature type="sequence conflict" description="In Ref. 1; CAE84067." evidence="7" ref="1">
    <location>
        <begin position="202"/>
        <end position="206"/>
    </location>
</feature>
<evidence type="ECO:0000250" key="1"/>
<evidence type="ECO:0000250" key="2">
    <source>
        <dbReference type="UniProtKB" id="Q8C6P8"/>
    </source>
</evidence>
<evidence type="ECO:0000255" key="3">
    <source>
        <dbReference type="PROSITE-ProRule" id="PRU00042"/>
    </source>
</evidence>
<evidence type="ECO:0000255" key="4">
    <source>
        <dbReference type="PROSITE-ProRule" id="PRU00119"/>
    </source>
</evidence>
<evidence type="ECO:0000256" key="5">
    <source>
        <dbReference type="SAM" id="MobiDB-lite"/>
    </source>
</evidence>
<evidence type="ECO:0000269" key="6">
    <source>
    </source>
</evidence>
<evidence type="ECO:0000305" key="7"/>
<protein>
    <recommendedName>
        <fullName>Zinc finger protein 57</fullName>
        <shortName>Zfp-57</shortName>
    </recommendedName>
</protein>
<dbReference type="EMBL" id="BX883052">
    <property type="protein sequence ID" value="CAE84067.1"/>
    <property type="molecule type" value="Genomic_DNA"/>
</dbReference>
<dbReference type="EMBL" id="BC127468">
    <property type="protein sequence ID" value="AAI27469.1"/>
    <property type="molecule type" value="mRNA"/>
</dbReference>
<dbReference type="RefSeq" id="NP_998730.2">
    <property type="nucleotide sequence ID" value="NM_213565.4"/>
</dbReference>
<dbReference type="RefSeq" id="XP_008770916.1">
    <property type="nucleotide sequence ID" value="XM_008772694.2"/>
</dbReference>
<dbReference type="RefSeq" id="XP_038954715.1">
    <property type="nucleotide sequence ID" value="XM_039098787.2"/>
</dbReference>
<dbReference type="RefSeq" id="XP_063135264.1">
    <property type="nucleotide sequence ID" value="XM_063279194.1"/>
</dbReference>
<dbReference type="RefSeq" id="XP_063135265.1">
    <property type="nucleotide sequence ID" value="XM_063279195.1"/>
</dbReference>
<dbReference type="RefSeq" id="XP_063135266.1">
    <property type="nucleotide sequence ID" value="XM_063279196.1"/>
</dbReference>
<dbReference type="RefSeq" id="XP_063135267.1">
    <property type="nucleotide sequence ID" value="XM_063279197.1"/>
</dbReference>
<dbReference type="SMR" id="A0JPK3"/>
<dbReference type="FunCoup" id="A0JPK3">
    <property type="interactions" value="9"/>
</dbReference>
<dbReference type="STRING" id="10116.ENSRNOP00000011704"/>
<dbReference type="PhosphoSitePlus" id="A0JPK3"/>
<dbReference type="PaxDb" id="10116-ENSRNOP00000011704"/>
<dbReference type="Ensembl" id="ENSRNOT00000011704.8">
    <property type="protein sequence ID" value="ENSRNOP00000011704.5"/>
    <property type="gene ID" value="ENSRNOG00000022730.7"/>
</dbReference>
<dbReference type="GeneID" id="361783"/>
<dbReference type="KEGG" id="rno:361783"/>
<dbReference type="UCSC" id="RGD:1302981">
    <property type="organism name" value="rat"/>
</dbReference>
<dbReference type="AGR" id="RGD:1302981"/>
<dbReference type="CTD" id="346171"/>
<dbReference type="RGD" id="1302981">
    <property type="gene designation" value="Zfp57"/>
</dbReference>
<dbReference type="eggNOG" id="KOG1721">
    <property type="taxonomic scope" value="Eukaryota"/>
</dbReference>
<dbReference type="GeneTree" id="ENSGT00390000002599"/>
<dbReference type="HOGENOM" id="CLU_677857_0_0_1"/>
<dbReference type="InParanoid" id="A0JPK3"/>
<dbReference type="OMA" id="MARIQEP"/>
<dbReference type="OrthoDB" id="6155966at2759"/>
<dbReference type="PhylomeDB" id="A0JPK3"/>
<dbReference type="TreeFam" id="TF337947"/>
<dbReference type="PRO" id="PR:A0JPK3"/>
<dbReference type="Proteomes" id="UP000002494">
    <property type="component" value="Chromosome 20"/>
</dbReference>
<dbReference type="Bgee" id="ENSRNOG00000022730">
    <property type="expression patterns" value="Expressed in cerebellum and 18 other cell types or tissues"/>
</dbReference>
<dbReference type="GO" id="GO:0000792">
    <property type="term" value="C:heterochromatin"/>
    <property type="evidence" value="ECO:0000266"/>
    <property type="project" value="RGD"/>
</dbReference>
<dbReference type="GO" id="GO:0005634">
    <property type="term" value="C:nucleus"/>
    <property type="evidence" value="ECO:0000266"/>
    <property type="project" value="RGD"/>
</dbReference>
<dbReference type="GO" id="GO:0003682">
    <property type="term" value="F:chromatin binding"/>
    <property type="evidence" value="ECO:0000266"/>
    <property type="project" value="RGD"/>
</dbReference>
<dbReference type="GO" id="GO:0003677">
    <property type="term" value="F:DNA binding"/>
    <property type="evidence" value="ECO:0000266"/>
    <property type="project" value="RGD"/>
</dbReference>
<dbReference type="GO" id="GO:0010385">
    <property type="term" value="F:double-stranded methylated DNA binding"/>
    <property type="evidence" value="ECO:0000266"/>
    <property type="project" value="RGD"/>
</dbReference>
<dbReference type="GO" id="GO:0008270">
    <property type="term" value="F:zinc ion binding"/>
    <property type="evidence" value="ECO:0007669"/>
    <property type="project" value="UniProtKB-KW"/>
</dbReference>
<dbReference type="GO" id="GO:0141068">
    <property type="term" value="P:autosome genomic imprinting"/>
    <property type="evidence" value="ECO:0000250"/>
    <property type="project" value="UniProtKB"/>
</dbReference>
<dbReference type="GO" id="GO:0044726">
    <property type="term" value="P:epigenetic programing of female pronucleus"/>
    <property type="evidence" value="ECO:0000266"/>
    <property type="project" value="RGD"/>
</dbReference>
<dbReference type="GO" id="GO:0044725">
    <property type="term" value="P:epigenetic programming in the zygotic pronuclei"/>
    <property type="evidence" value="ECO:0000266"/>
    <property type="project" value="RGD"/>
</dbReference>
<dbReference type="GO" id="GO:0071514">
    <property type="term" value="P:genomic imprinting"/>
    <property type="evidence" value="ECO:0000266"/>
    <property type="project" value="RGD"/>
</dbReference>
<dbReference type="GO" id="GO:0044027">
    <property type="term" value="P:negative regulation of gene expression via chromosomal CpG island methylation"/>
    <property type="evidence" value="ECO:0000266"/>
    <property type="project" value="RGD"/>
</dbReference>
<dbReference type="GO" id="GO:0000122">
    <property type="term" value="P:negative regulation of transcription by RNA polymerase II"/>
    <property type="evidence" value="ECO:0000266"/>
    <property type="project" value="RGD"/>
</dbReference>
<dbReference type="CDD" id="cd07765">
    <property type="entry name" value="KRAB_A-box"/>
    <property type="match status" value="1"/>
</dbReference>
<dbReference type="FunFam" id="3.30.160.60:FF:004597">
    <property type="match status" value="1"/>
</dbReference>
<dbReference type="Gene3D" id="6.10.140.140">
    <property type="match status" value="1"/>
</dbReference>
<dbReference type="Gene3D" id="3.30.160.60">
    <property type="entry name" value="Classic Zinc Finger"/>
    <property type="match status" value="1"/>
</dbReference>
<dbReference type="InterPro" id="IPR001909">
    <property type="entry name" value="KRAB"/>
</dbReference>
<dbReference type="InterPro" id="IPR036051">
    <property type="entry name" value="KRAB_dom_sf"/>
</dbReference>
<dbReference type="InterPro" id="IPR050758">
    <property type="entry name" value="Znf_C2H2-type"/>
</dbReference>
<dbReference type="InterPro" id="IPR036236">
    <property type="entry name" value="Znf_C2H2_sf"/>
</dbReference>
<dbReference type="InterPro" id="IPR013087">
    <property type="entry name" value="Znf_C2H2_type"/>
</dbReference>
<dbReference type="PANTHER" id="PTHR23234:SF10">
    <property type="entry name" value="RIKEN CDNA 6720489N17 GENE-RELATED"/>
    <property type="match status" value="1"/>
</dbReference>
<dbReference type="PANTHER" id="PTHR23234">
    <property type="entry name" value="ZNF44 PROTEIN"/>
    <property type="match status" value="1"/>
</dbReference>
<dbReference type="Pfam" id="PF01352">
    <property type="entry name" value="KRAB"/>
    <property type="match status" value="1"/>
</dbReference>
<dbReference type="Pfam" id="PF00096">
    <property type="entry name" value="zf-C2H2"/>
    <property type="match status" value="2"/>
</dbReference>
<dbReference type="Pfam" id="PF12874">
    <property type="entry name" value="zf-met"/>
    <property type="match status" value="1"/>
</dbReference>
<dbReference type="SMART" id="SM00349">
    <property type="entry name" value="KRAB"/>
    <property type="match status" value="1"/>
</dbReference>
<dbReference type="SMART" id="SM00355">
    <property type="entry name" value="ZnF_C2H2"/>
    <property type="match status" value="4"/>
</dbReference>
<dbReference type="SUPFAM" id="SSF57667">
    <property type="entry name" value="beta-beta-alpha zinc fingers"/>
    <property type="match status" value="1"/>
</dbReference>
<dbReference type="SUPFAM" id="SSF109640">
    <property type="entry name" value="KRAB domain (Kruppel-associated box)"/>
    <property type="match status" value="1"/>
</dbReference>
<dbReference type="PROSITE" id="PS50805">
    <property type="entry name" value="KRAB"/>
    <property type="match status" value="1"/>
</dbReference>
<dbReference type="PROSITE" id="PS00028">
    <property type="entry name" value="ZINC_FINGER_C2H2_1"/>
    <property type="match status" value="3"/>
</dbReference>
<dbReference type="PROSITE" id="PS50157">
    <property type="entry name" value="ZINC_FINGER_C2H2_2"/>
    <property type="match status" value="4"/>
</dbReference>
<sequence length="406" mass="46588">MAAKKQSKSAKALRTTVRYEDVAVSFTQEEWEYLTSTQKTLYQKVMSETFKNLTFVESKKKPQEPNPNLKDKDDDKSSTCTGVFKGGPFFFCLTCGKCFKKNTFLFNHQFPVRSRRLAVTKPQSRKALGHKPQHRGDRPFFCNLCGKTYRDASGLSRHRRAHVGYRPRSCPECGKCFRDQSEVNRHLKVHQNKKPVAGSHVKVHQNKPVASNQKQKGRVPPTTRESPAPALRHLKVIQGPVARAKARSSRASSLEVRSTSVTVARPREKVYCPYCRITFTMRTCLLNHLKIHFRRQPNQHFCCKESHSSNTLRMQKIYNCPVCDSSFRGKESLLNHLCSRRPIRLSKCWEILGHLLGYLREPLGNIFKVRESRKRRRKRISSDSSETEGPSGSDEVMEVDTDSDLS</sequence>
<gene>
    <name type="primary">Zfp57</name>
</gene>
<comment type="function">
    <text evidence="2">Transcription regulator required to maintain maternal and paternal gene imprinting, a process by which gene expression is restricted in a parent of origin-specific manner by epigenetic modification of genomic DNA and chromatin, including DNA methylation. Acts by controlling DNA methylation during the earliest multicellular stages of development at multiple imprinting control regions (ICRs). Acts together with ZNF445. Required for the establishment of maternal methylation imprints at SNRPN locus. Acts as a transcriptional repressor in Schwann cells. Binds to a 5'-TGCCGC-3' consensus sequence and recognizes the methylated CpG within this element.</text>
</comment>
<comment type="subcellular location">
    <subcellularLocation>
        <location evidence="2">Nucleus</location>
    </subcellularLocation>
    <text evidence="2">Binds various differentially methylated regions (DMR), including the Snrpn DMR.</text>
</comment>
<comment type="tissue specificity">
    <text evidence="6">Expressed in oligodendrocytes and at lower levels in astrocytes.</text>
</comment>
<comment type="domain">
    <text evidence="1">The KRAB domain is required for function as transcriptional repressor.</text>
</comment>
<comment type="domain">
    <text evidence="1">Zinc fingers 2 and 3 mediate recognition of the target element, ZF2 interacting with the 5' half (TGC) and ZF3 interacting with the 3' half (CGC).</text>
</comment>
<comment type="similarity">
    <text evidence="7">Belongs to the krueppel C2H2-type zinc-finger protein family.</text>
</comment>
<proteinExistence type="evidence at transcript level"/>
<name>ZFP57_RAT</name>
<organism>
    <name type="scientific">Rattus norvegicus</name>
    <name type="common">Rat</name>
    <dbReference type="NCBI Taxonomy" id="10116"/>
    <lineage>
        <taxon>Eukaryota</taxon>
        <taxon>Metazoa</taxon>
        <taxon>Chordata</taxon>
        <taxon>Craniata</taxon>
        <taxon>Vertebrata</taxon>
        <taxon>Euteleostomi</taxon>
        <taxon>Mammalia</taxon>
        <taxon>Eutheria</taxon>
        <taxon>Euarchontoglires</taxon>
        <taxon>Glires</taxon>
        <taxon>Rodentia</taxon>
        <taxon>Myomorpha</taxon>
        <taxon>Muroidea</taxon>
        <taxon>Muridae</taxon>
        <taxon>Murinae</taxon>
        <taxon>Rattus</taxon>
    </lineage>
</organism>
<accession>A0JPK3</accession>
<accession>Q6MFY0</accession>
<reference key="1">
    <citation type="journal article" date="2004" name="Genome Res.">
        <title>The genomic sequence and comparative analysis of the rat major histocompatibility complex.</title>
        <authorList>
            <person name="Hurt P."/>
            <person name="Walter L."/>
            <person name="Sudbrak R."/>
            <person name="Klages S."/>
            <person name="Mueller I."/>
            <person name="Shiina T."/>
            <person name="Inoko H."/>
            <person name="Lehrach H."/>
            <person name="Guenther E."/>
            <person name="Reinhardt R."/>
            <person name="Himmelbauer H."/>
        </authorList>
    </citation>
    <scope>NUCLEOTIDE SEQUENCE [LARGE SCALE GENOMIC DNA]</scope>
    <source>
        <strain>Brown Norway</strain>
    </source>
</reference>
<reference key="2">
    <citation type="journal article" date="2004" name="Genome Res.">
        <title>The status, quality, and expansion of the NIH full-length cDNA project: the Mammalian Gene Collection (MGC).</title>
        <authorList>
            <consortium name="The MGC Project Team"/>
        </authorList>
    </citation>
    <scope>NUCLEOTIDE SEQUENCE [LARGE SCALE MRNA]</scope>
    <source>
        <tissue>Brain</tissue>
    </source>
</reference>
<reference key="3">
    <citation type="journal article" date="2004" name="J. Biol. Chem.">
        <title>Identification and characterization of ZFP-57, a novel zinc finger transcription factor in the mammalian peripheral nervous system.</title>
        <authorList>
            <person name="Alonso M.B."/>
            <person name="Zoidl G."/>
            <person name="Taveggia C."/>
            <person name="Bosse F."/>
            <person name="Zoidl C."/>
            <person name="Rahman M."/>
            <person name="Parmantier E."/>
            <person name="Dean C.H."/>
            <person name="Harris B.S."/>
            <person name="Wrabetz L."/>
            <person name="Mueller H.W."/>
            <person name="Jessen K.R."/>
            <person name="Mirsky R."/>
        </authorList>
    </citation>
    <scope>TISSUE SPECIFICITY</scope>
</reference>
<keyword id="KW-0217">Developmental protein</keyword>
<keyword id="KW-0238">DNA-binding</keyword>
<keyword id="KW-0479">Metal-binding</keyword>
<keyword id="KW-0539">Nucleus</keyword>
<keyword id="KW-1185">Reference proteome</keyword>
<keyword id="KW-0677">Repeat</keyword>
<keyword id="KW-0678">Repressor</keyword>
<keyword id="KW-0804">Transcription</keyword>
<keyword id="KW-0805">Transcription regulation</keyword>
<keyword id="KW-0862">Zinc</keyword>
<keyword id="KW-0863">Zinc-finger</keyword>